<comment type="function">
    <text evidence="1">Involved in unsaturated fatty acids biosynthesis. Catalyzes the dehydration of short chain beta-hydroxyacyl-ACPs and long chain saturated and unsaturated beta-hydroxyacyl-ACPs (By similarity).</text>
</comment>
<comment type="catalytic activity">
    <reaction>
        <text>a (3R)-hydroxyacyl-[ACP] = a (2E)-enoyl-[ACP] + H2O</text>
        <dbReference type="Rhea" id="RHEA:13097"/>
        <dbReference type="Rhea" id="RHEA-COMP:9925"/>
        <dbReference type="Rhea" id="RHEA-COMP:9945"/>
        <dbReference type="ChEBI" id="CHEBI:15377"/>
        <dbReference type="ChEBI" id="CHEBI:78784"/>
        <dbReference type="ChEBI" id="CHEBI:78827"/>
        <dbReference type="EC" id="4.2.1.59"/>
    </reaction>
</comment>
<comment type="subunit">
    <text evidence="1">Oligomer.</text>
</comment>
<comment type="subcellular location">
    <subcellularLocation>
        <location evidence="1">Cytoplasm</location>
    </subcellularLocation>
</comment>
<comment type="PTM">
    <text evidence="1">The N-terminus is blocked.</text>
</comment>
<comment type="similarity">
    <text evidence="2">Belongs to the thioester dehydratase family. FabZ subfamily.</text>
</comment>
<feature type="chain" id="PRO_0000091675" description="3-hydroxyacyl-[acyl-carrier-protein] dehydratase FabZ">
    <location>
        <begin position="1"/>
        <end position="151"/>
    </location>
</feature>
<feature type="active site" evidence="1">
    <location>
        <position position="54"/>
    </location>
</feature>
<sequence length="151" mass="17033">MTTNTHTLQIEEILELLPHRFPFLLVDRVLDFEEGRFLRAVKNVSVNEPFFQGHFPGKPIFPGVLILEAMAQATGILAFKSVGKLEPGELYYFAGIDEARFKRPVVPGDQMIMEVTFEKTRRGLTRFKGVALVDGKVVCEATMMCARSREA</sequence>
<proteinExistence type="inferred from homology"/>
<keyword id="KW-0963">Cytoplasm</keyword>
<keyword id="KW-0441">Lipid A biosynthesis</keyword>
<keyword id="KW-0444">Lipid biosynthesis</keyword>
<keyword id="KW-0443">Lipid metabolism</keyword>
<keyword id="KW-0456">Lyase</keyword>
<keyword id="KW-1185">Reference proteome</keyword>
<dbReference type="EC" id="4.2.1.59"/>
<dbReference type="EMBL" id="AE005174">
    <property type="protein sequence ID" value="AAG54482.1"/>
    <property type="molecule type" value="Genomic_DNA"/>
</dbReference>
<dbReference type="EMBL" id="BA000007">
    <property type="protein sequence ID" value="BAB33605.2"/>
    <property type="molecule type" value="Genomic_DNA"/>
</dbReference>
<dbReference type="PIR" id="F85502">
    <property type="entry name" value="F85502"/>
</dbReference>
<dbReference type="PIR" id="F90651">
    <property type="entry name" value="F90651"/>
</dbReference>
<dbReference type="RefSeq" id="NP_308209.1">
    <property type="nucleotide sequence ID" value="NC_002695.1"/>
</dbReference>
<dbReference type="RefSeq" id="WP_000210739.1">
    <property type="nucleotide sequence ID" value="NZ_VOAI01000002.1"/>
</dbReference>
<dbReference type="SMR" id="P0A6Q8"/>
<dbReference type="STRING" id="155864.Z0192"/>
<dbReference type="GeneID" id="913892"/>
<dbReference type="GeneID" id="93777245"/>
<dbReference type="KEGG" id="ece:Z0192"/>
<dbReference type="KEGG" id="ecs:ECs_0182"/>
<dbReference type="PATRIC" id="fig|386585.9.peg.285"/>
<dbReference type="eggNOG" id="COG0764">
    <property type="taxonomic scope" value="Bacteria"/>
</dbReference>
<dbReference type="HOGENOM" id="CLU_078912_1_0_6"/>
<dbReference type="OMA" id="FPGRPLM"/>
<dbReference type="Proteomes" id="UP000000558">
    <property type="component" value="Chromosome"/>
</dbReference>
<dbReference type="Proteomes" id="UP000002519">
    <property type="component" value="Chromosome"/>
</dbReference>
<dbReference type="GO" id="GO:0005737">
    <property type="term" value="C:cytoplasm"/>
    <property type="evidence" value="ECO:0007669"/>
    <property type="project" value="UniProtKB-SubCell"/>
</dbReference>
<dbReference type="GO" id="GO:0016020">
    <property type="term" value="C:membrane"/>
    <property type="evidence" value="ECO:0007669"/>
    <property type="project" value="GOC"/>
</dbReference>
<dbReference type="GO" id="GO:0019171">
    <property type="term" value="F:(3R)-hydroxyacyl-[acyl-carrier-protein] dehydratase activity"/>
    <property type="evidence" value="ECO:0007669"/>
    <property type="project" value="UniProtKB-EC"/>
</dbReference>
<dbReference type="GO" id="GO:0006633">
    <property type="term" value="P:fatty acid biosynthetic process"/>
    <property type="evidence" value="ECO:0007669"/>
    <property type="project" value="UniProtKB-UniRule"/>
</dbReference>
<dbReference type="GO" id="GO:0009245">
    <property type="term" value="P:lipid A biosynthetic process"/>
    <property type="evidence" value="ECO:0007669"/>
    <property type="project" value="UniProtKB-UniRule"/>
</dbReference>
<dbReference type="CDD" id="cd01288">
    <property type="entry name" value="FabZ"/>
    <property type="match status" value="1"/>
</dbReference>
<dbReference type="FunFam" id="3.10.129.10:FF:000001">
    <property type="entry name" value="3-hydroxyacyl-[acyl-carrier-protein] dehydratase FabZ"/>
    <property type="match status" value="1"/>
</dbReference>
<dbReference type="Gene3D" id="3.10.129.10">
    <property type="entry name" value="Hotdog Thioesterase"/>
    <property type="match status" value="1"/>
</dbReference>
<dbReference type="HAMAP" id="MF_00406">
    <property type="entry name" value="FabZ"/>
    <property type="match status" value="1"/>
</dbReference>
<dbReference type="InterPro" id="IPR013114">
    <property type="entry name" value="FabA_FabZ"/>
</dbReference>
<dbReference type="InterPro" id="IPR010084">
    <property type="entry name" value="FabZ"/>
</dbReference>
<dbReference type="InterPro" id="IPR029069">
    <property type="entry name" value="HotDog_dom_sf"/>
</dbReference>
<dbReference type="NCBIfam" id="TIGR01750">
    <property type="entry name" value="fabZ"/>
    <property type="match status" value="1"/>
</dbReference>
<dbReference type="NCBIfam" id="NF000582">
    <property type="entry name" value="PRK00006.1"/>
    <property type="match status" value="1"/>
</dbReference>
<dbReference type="PANTHER" id="PTHR30272">
    <property type="entry name" value="3-HYDROXYACYL-[ACYL-CARRIER-PROTEIN] DEHYDRATASE"/>
    <property type="match status" value="1"/>
</dbReference>
<dbReference type="PANTHER" id="PTHR30272:SF1">
    <property type="entry name" value="3-HYDROXYACYL-[ACYL-CARRIER-PROTEIN] DEHYDRATASE"/>
    <property type="match status" value="1"/>
</dbReference>
<dbReference type="Pfam" id="PF07977">
    <property type="entry name" value="FabA"/>
    <property type="match status" value="1"/>
</dbReference>
<dbReference type="SUPFAM" id="SSF54637">
    <property type="entry name" value="Thioesterase/thiol ester dehydrase-isomerase"/>
    <property type="match status" value="1"/>
</dbReference>
<reference key="1">
    <citation type="journal article" date="2001" name="Nature">
        <title>Genome sequence of enterohaemorrhagic Escherichia coli O157:H7.</title>
        <authorList>
            <person name="Perna N.T."/>
            <person name="Plunkett G. III"/>
            <person name="Burland V."/>
            <person name="Mau B."/>
            <person name="Glasner J.D."/>
            <person name="Rose D.J."/>
            <person name="Mayhew G.F."/>
            <person name="Evans P.S."/>
            <person name="Gregor J."/>
            <person name="Kirkpatrick H.A."/>
            <person name="Posfai G."/>
            <person name="Hackett J."/>
            <person name="Klink S."/>
            <person name="Boutin A."/>
            <person name="Shao Y."/>
            <person name="Miller L."/>
            <person name="Grotbeck E.J."/>
            <person name="Davis N.W."/>
            <person name="Lim A."/>
            <person name="Dimalanta E.T."/>
            <person name="Potamousis K."/>
            <person name="Apodaca J."/>
            <person name="Anantharaman T.S."/>
            <person name="Lin J."/>
            <person name="Yen G."/>
            <person name="Schwartz D.C."/>
            <person name="Welch R.A."/>
            <person name="Blattner F.R."/>
        </authorList>
    </citation>
    <scope>NUCLEOTIDE SEQUENCE [LARGE SCALE GENOMIC DNA]</scope>
    <source>
        <strain>O157:H7 / EDL933 / ATCC 700927 / EHEC</strain>
    </source>
</reference>
<reference key="2">
    <citation type="journal article" date="2001" name="DNA Res.">
        <title>Complete genome sequence of enterohemorrhagic Escherichia coli O157:H7 and genomic comparison with a laboratory strain K-12.</title>
        <authorList>
            <person name="Hayashi T."/>
            <person name="Makino K."/>
            <person name="Ohnishi M."/>
            <person name="Kurokawa K."/>
            <person name="Ishii K."/>
            <person name="Yokoyama K."/>
            <person name="Han C.-G."/>
            <person name="Ohtsubo E."/>
            <person name="Nakayama K."/>
            <person name="Murata T."/>
            <person name="Tanaka M."/>
            <person name="Tobe T."/>
            <person name="Iida T."/>
            <person name="Takami H."/>
            <person name="Honda T."/>
            <person name="Sasakawa C."/>
            <person name="Ogasawara N."/>
            <person name="Yasunaga T."/>
            <person name="Kuhara S."/>
            <person name="Shiba T."/>
            <person name="Hattori M."/>
            <person name="Shinagawa H."/>
        </authorList>
    </citation>
    <scope>NUCLEOTIDE SEQUENCE [LARGE SCALE GENOMIC DNA]</scope>
    <source>
        <strain>O157:H7 / Sakai / RIMD 0509952 / EHEC</strain>
    </source>
</reference>
<protein>
    <recommendedName>
        <fullName>3-hydroxyacyl-[acyl-carrier-protein] dehydratase FabZ</fullName>
        <ecNumber>4.2.1.59</ecNumber>
    </recommendedName>
    <alternativeName>
        <fullName>(3R)-hydroxymyristoyl-[acyl-carrier-protein] dehydratase</fullName>
        <shortName>(3R)-hydroxymyristoyl-ACP dehydrase</shortName>
    </alternativeName>
    <alternativeName>
        <fullName>Beta-hydroxyacyl-ACP dehydratase</fullName>
    </alternativeName>
</protein>
<gene>
    <name type="primary">fabZ</name>
    <name type="ordered locus">Z0192</name>
    <name type="ordered locus">ECs0182</name>
</gene>
<accession>P0A6Q8</accession>
<accession>P21774</accession>
<organism>
    <name type="scientific">Escherichia coli O157:H7</name>
    <dbReference type="NCBI Taxonomy" id="83334"/>
    <lineage>
        <taxon>Bacteria</taxon>
        <taxon>Pseudomonadati</taxon>
        <taxon>Pseudomonadota</taxon>
        <taxon>Gammaproteobacteria</taxon>
        <taxon>Enterobacterales</taxon>
        <taxon>Enterobacteriaceae</taxon>
        <taxon>Escherichia</taxon>
    </lineage>
</organism>
<name>FABZ_ECO57</name>
<evidence type="ECO:0000250" key="1"/>
<evidence type="ECO:0000305" key="2"/>